<sequence length="286" mass="31347">MKNILSIQSHVVYGYAGNKSATFPMQLLGIDVWALNTVQFSNHTQYGKWTGMVIPKEQIGEIVQGIDNIGELHQCDAVLSGYIGSAEQVEEIIKAFHKIKERNPKAIYLCDPVMGHPDKGCVVADGVKEGLIKIAMAQADIITPNLVELRELSGLAVENFEQAIEAVKVILSKGPKKVLVKHLSRVGKNAAQFEMLLANNDGIWHISRPLHNFNKEPVGVGDLTAGLFLANLLNGKSDVEAFEHTANTVNDVMETTHNAGVYELQTIAAREWIVNPKSQYKAVKIG</sequence>
<keyword id="KW-0067">ATP-binding</keyword>
<keyword id="KW-0418">Kinase</keyword>
<keyword id="KW-0460">Magnesium</keyword>
<keyword id="KW-0547">Nucleotide-binding</keyword>
<keyword id="KW-0808">Transferase</keyword>
<dbReference type="EC" id="2.7.1.35" evidence="1"/>
<dbReference type="EMBL" id="CP000947">
    <property type="protein sequence ID" value="ACA31154.1"/>
    <property type="molecule type" value="Genomic_DNA"/>
</dbReference>
<dbReference type="RefSeq" id="WP_011609087.1">
    <property type="nucleotide sequence ID" value="NC_010519.1"/>
</dbReference>
<dbReference type="SMR" id="B0UUD2"/>
<dbReference type="STRING" id="228400.HSM_1411"/>
<dbReference type="GeneID" id="31487709"/>
<dbReference type="KEGG" id="hsm:HSM_1411"/>
<dbReference type="HOGENOM" id="CLU_046496_3_0_6"/>
<dbReference type="UniPathway" id="UPA01068">
    <property type="reaction ID" value="UER00298"/>
</dbReference>
<dbReference type="GO" id="GO:0005829">
    <property type="term" value="C:cytosol"/>
    <property type="evidence" value="ECO:0007669"/>
    <property type="project" value="TreeGrafter"/>
</dbReference>
<dbReference type="GO" id="GO:0005524">
    <property type="term" value="F:ATP binding"/>
    <property type="evidence" value="ECO:0007669"/>
    <property type="project" value="UniProtKB-UniRule"/>
</dbReference>
<dbReference type="GO" id="GO:0000287">
    <property type="term" value="F:magnesium ion binding"/>
    <property type="evidence" value="ECO:0007669"/>
    <property type="project" value="UniProtKB-UniRule"/>
</dbReference>
<dbReference type="GO" id="GO:0008478">
    <property type="term" value="F:pyridoxal kinase activity"/>
    <property type="evidence" value="ECO:0007669"/>
    <property type="project" value="UniProtKB-UniRule"/>
</dbReference>
<dbReference type="GO" id="GO:0009443">
    <property type="term" value="P:pyridoxal 5'-phosphate salvage"/>
    <property type="evidence" value="ECO:0007669"/>
    <property type="project" value="UniProtKB-UniRule"/>
</dbReference>
<dbReference type="CDD" id="cd01173">
    <property type="entry name" value="pyridoxal_pyridoxamine_kinase"/>
    <property type="match status" value="1"/>
</dbReference>
<dbReference type="FunFam" id="3.40.1190.20:FF:000008">
    <property type="entry name" value="Pyridoxal kinase PdxY"/>
    <property type="match status" value="1"/>
</dbReference>
<dbReference type="Gene3D" id="3.40.1190.20">
    <property type="match status" value="1"/>
</dbReference>
<dbReference type="HAMAP" id="MF_01639">
    <property type="entry name" value="PdxY"/>
    <property type="match status" value="1"/>
</dbReference>
<dbReference type="InterPro" id="IPR013749">
    <property type="entry name" value="PM/HMP-P_kinase-1"/>
</dbReference>
<dbReference type="InterPro" id="IPR004625">
    <property type="entry name" value="PyrdxlKinase"/>
</dbReference>
<dbReference type="InterPro" id="IPR023685">
    <property type="entry name" value="Pyridoxal_kinase_PdxY"/>
</dbReference>
<dbReference type="InterPro" id="IPR029056">
    <property type="entry name" value="Ribokinase-like"/>
</dbReference>
<dbReference type="NCBIfam" id="NF004398">
    <property type="entry name" value="PRK05756.1"/>
    <property type="match status" value="1"/>
</dbReference>
<dbReference type="NCBIfam" id="TIGR00687">
    <property type="entry name" value="pyridox_kin"/>
    <property type="match status" value="1"/>
</dbReference>
<dbReference type="PANTHER" id="PTHR10534">
    <property type="entry name" value="PYRIDOXAL KINASE"/>
    <property type="match status" value="1"/>
</dbReference>
<dbReference type="PANTHER" id="PTHR10534:SF2">
    <property type="entry name" value="PYRIDOXAL KINASE"/>
    <property type="match status" value="1"/>
</dbReference>
<dbReference type="Pfam" id="PF08543">
    <property type="entry name" value="Phos_pyr_kin"/>
    <property type="match status" value="1"/>
</dbReference>
<dbReference type="SUPFAM" id="SSF53613">
    <property type="entry name" value="Ribokinase-like"/>
    <property type="match status" value="1"/>
</dbReference>
<organism>
    <name type="scientific">Histophilus somni (strain 2336)</name>
    <name type="common">Haemophilus somnus</name>
    <dbReference type="NCBI Taxonomy" id="228400"/>
    <lineage>
        <taxon>Bacteria</taxon>
        <taxon>Pseudomonadati</taxon>
        <taxon>Pseudomonadota</taxon>
        <taxon>Gammaproteobacteria</taxon>
        <taxon>Pasteurellales</taxon>
        <taxon>Pasteurellaceae</taxon>
        <taxon>Histophilus</taxon>
    </lineage>
</organism>
<name>PDXY_HISS2</name>
<feature type="chain" id="PRO_1000088204" description="Pyridoxal kinase PdxY">
    <location>
        <begin position="1"/>
        <end position="286"/>
    </location>
</feature>
<feature type="binding site" evidence="1">
    <location>
        <position position="9"/>
    </location>
    <ligand>
        <name>substrate</name>
    </ligand>
</feature>
<feature type="binding site" evidence="1">
    <location>
        <begin position="44"/>
        <end position="45"/>
    </location>
    <ligand>
        <name>substrate</name>
    </ligand>
</feature>
<feature type="binding site" evidence="1">
    <location>
        <position position="111"/>
    </location>
    <ligand>
        <name>ATP</name>
        <dbReference type="ChEBI" id="CHEBI:30616"/>
    </ligand>
</feature>
<feature type="binding site" evidence="1">
    <location>
        <position position="148"/>
    </location>
    <ligand>
        <name>ATP</name>
        <dbReference type="ChEBI" id="CHEBI:30616"/>
    </ligand>
</feature>
<feature type="binding site" evidence="1">
    <location>
        <position position="181"/>
    </location>
    <ligand>
        <name>ATP</name>
        <dbReference type="ChEBI" id="CHEBI:30616"/>
    </ligand>
</feature>
<feature type="binding site" evidence="1">
    <location>
        <position position="222"/>
    </location>
    <ligand>
        <name>substrate</name>
    </ligand>
</feature>
<reference key="1">
    <citation type="submission" date="2008-02" db="EMBL/GenBank/DDBJ databases">
        <title>Complete sequence of Haemophilus somnus 2336.</title>
        <authorList>
            <consortium name="US DOE Joint Genome Institute"/>
            <person name="Siddaramappa S."/>
            <person name="Duncan A.J."/>
            <person name="Challacombe J.F."/>
            <person name="Rainey D."/>
            <person name="Gillaspy A.F."/>
            <person name="Carson M."/>
            <person name="Gipson J."/>
            <person name="Gipson M."/>
            <person name="Bruce D."/>
            <person name="Detter J.C."/>
            <person name="Han C.S."/>
            <person name="Land M."/>
            <person name="Tapia R."/>
            <person name="Thompson L.S."/>
            <person name="Orvis J."/>
            <person name="Zaitshik J."/>
            <person name="Barnes G."/>
            <person name="Brettin T.S."/>
            <person name="Dyer D.W."/>
            <person name="Inzana T.J."/>
        </authorList>
    </citation>
    <scope>NUCLEOTIDE SEQUENCE [LARGE SCALE GENOMIC DNA]</scope>
    <source>
        <strain>2336</strain>
    </source>
</reference>
<protein>
    <recommendedName>
        <fullName evidence="1">Pyridoxal kinase PdxY</fullName>
        <shortName evidence="1">PL kinase</shortName>
        <ecNumber evidence="1">2.7.1.35</ecNumber>
    </recommendedName>
</protein>
<proteinExistence type="inferred from homology"/>
<gene>
    <name evidence="1" type="primary">pdxY</name>
    <name type="ordered locus">HSM_1411</name>
</gene>
<comment type="function">
    <text evidence="1">Pyridoxal kinase involved in the salvage pathway of pyridoxal 5'-phosphate (PLP). Catalyzes the phosphorylation of pyridoxal to PLP.</text>
</comment>
<comment type="catalytic activity">
    <reaction evidence="1">
        <text>pyridoxal + ATP = pyridoxal 5'-phosphate + ADP + H(+)</text>
        <dbReference type="Rhea" id="RHEA:10224"/>
        <dbReference type="ChEBI" id="CHEBI:15378"/>
        <dbReference type="ChEBI" id="CHEBI:17310"/>
        <dbReference type="ChEBI" id="CHEBI:30616"/>
        <dbReference type="ChEBI" id="CHEBI:456216"/>
        <dbReference type="ChEBI" id="CHEBI:597326"/>
        <dbReference type="EC" id="2.7.1.35"/>
    </reaction>
</comment>
<comment type="cofactor">
    <cofactor evidence="1">
        <name>Mg(2+)</name>
        <dbReference type="ChEBI" id="CHEBI:18420"/>
    </cofactor>
</comment>
<comment type="pathway">
    <text evidence="1">Cofactor metabolism; pyridoxal 5'-phosphate salvage; pyridoxal 5'-phosphate from pyridoxal: step 1/1.</text>
</comment>
<comment type="subunit">
    <text evidence="1">Homodimer.</text>
</comment>
<comment type="similarity">
    <text evidence="1">Belongs to the pyridoxine kinase family. PdxY subfamily.</text>
</comment>
<accession>B0UUD2</accession>
<evidence type="ECO:0000255" key="1">
    <source>
        <dbReference type="HAMAP-Rule" id="MF_01639"/>
    </source>
</evidence>